<keyword id="KW-0687">Ribonucleoprotein</keyword>
<keyword id="KW-0689">Ribosomal protein</keyword>
<feature type="chain" id="PRO_0000302284" description="Large ribosomal subunit protein bL36">
    <location>
        <begin position="1"/>
        <end position="41"/>
    </location>
</feature>
<organism>
    <name type="scientific">Rhodopseudomonas palustris (strain BisB18)</name>
    <dbReference type="NCBI Taxonomy" id="316056"/>
    <lineage>
        <taxon>Bacteria</taxon>
        <taxon>Pseudomonadati</taxon>
        <taxon>Pseudomonadota</taxon>
        <taxon>Alphaproteobacteria</taxon>
        <taxon>Hyphomicrobiales</taxon>
        <taxon>Nitrobacteraceae</taxon>
        <taxon>Rhodopseudomonas</taxon>
    </lineage>
</organism>
<protein>
    <recommendedName>
        <fullName evidence="1">Large ribosomal subunit protein bL36</fullName>
    </recommendedName>
    <alternativeName>
        <fullName evidence="2">50S ribosomal protein L36</fullName>
    </alternativeName>
</protein>
<accession>Q20ZC1</accession>
<proteinExistence type="inferred from homology"/>
<name>RL36_RHOPB</name>
<dbReference type="EMBL" id="CP000301">
    <property type="protein sequence ID" value="ABD89515.1"/>
    <property type="molecule type" value="Genomic_DNA"/>
</dbReference>
<dbReference type="SMR" id="Q20ZC1"/>
<dbReference type="STRING" id="316056.RPC_3989"/>
<dbReference type="KEGG" id="rpc:RPC_3989"/>
<dbReference type="eggNOG" id="COG0257">
    <property type="taxonomic scope" value="Bacteria"/>
</dbReference>
<dbReference type="HOGENOM" id="CLU_135723_3_0_5"/>
<dbReference type="OrthoDB" id="9801558at2"/>
<dbReference type="GO" id="GO:1990904">
    <property type="term" value="C:ribonucleoprotein complex"/>
    <property type="evidence" value="ECO:0007669"/>
    <property type="project" value="UniProtKB-KW"/>
</dbReference>
<dbReference type="GO" id="GO:0005840">
    <property type="term" value="C:ribosome"/>
    <property type="evidence" value="ECO:0007669"/>
    <property type="project" value="UniProtKB-KW"/>
</dbReference>
<dbReference type="GO" id="GO:0003735">
    <property type="term" value="F:structural constituent of ribosome"/>
    <property type="evidence" value="ECO:0007669"/>
    <property type="project" value="InterPro"/>
</dbReference>
<dbReference type="GO" id="GO:0006412">
    <property type="term" value="P:translation"/>
    <property type="evidence" value="ECO:0007669"/>
    <property type="project" value="UniProtKB-UniRule"/>
</dbReference>
<dbReference type="HAMAP" id="MF_00251">
    <property type="entry name" value="Ribosomal_bL36"/>
    <property type="match status" value="1"/>
</dbReference>
<dbReference type="InterPro" id="IPR000473">
    <property type="entry name" value="Ribosomal_bL36"/>
</dbReference>
<dbReference type="InterPro" id="IPR035977">
    <property type="entry name" value="Ribosomal_bL36_sp"/>
</dbReference>
<dbReference type="InterPro" id="IPR047621">
    <property type="entry name" value="Ribosomal_L36_bact"/>
</dbReference>
<dbReference type="NCBIfam" id="NF002021">
    <property type="entry name" value="PRK00831.1"/>
    <property type="match status" value="1"/>
</dbReference>
<dbReference type="NCBIfam" id="TIGR01022">
    <property type="entry name" value="rpmJ_bact"/>
    <property type="match status" value="1"/>
</dbReference>
<dbReference type="PANTHER" id="PTHR47781">
    <property type="entry name" value="50S RIBOSOMAL PROTEIN L36 2"/>
    <property type="match status" value="1"/>
</dbReference>
<dbReference type="PANTHER" id="PTHR47781:SF1">
    <property type="entry name" value="LARGE RIBOSOMAL SUBUNIT PROTEIN BL36B"/>
    <property type="match status" value="1"/>
</dbReference>
<dbReference type="Pfam" id="PF00444">
    <property type="entry name" value="Ribosomal_L36"/>
    <property type="match status" value="1"/>
</dbReference>
<dbReference type="SUPFAM" id="SSF57840">
    <property type="entry name" value="Ribosomal protein L36"/>
    <property type="match status" value="1"/>
</dbReference>
<dbReference type="PROSITE" id="PS00828">
    <property type="entry name" value="RIBOSOMAL_L36"/>
    <property type="match status" value="1"/>
</dbReference>
<evidence type="ECO:0000255" key="1">
    <source>
        <dbReference type="HAMAP-Rule" id="MF_00251"/>
    </source>
</evidence>
<evidence type="ECO:0000305" key="2"/>
<gene>
    <name evidence="1" type="primary">rpmJ</name>
    <name type="ordered locus">RPC_3989</name>
</gene>
<sequence>MKVRNSLKSLRSRHRDNRLVRRKGRVYVINKVQRRFKARQG</sequence>
<comment type="similarity">
    <text evidence="1">Belongs to the bacterial ribosomal protein bL36 family.</text>
</comment>
<reference key="1">
    <citation type="submission" date="2006-03" db="EMBL/GenBank/DDBJ databases">
        <title>Complete sequence of Rhodopseudomonas palustris BisB18.</title>
        <authorList>
            <consortium name="US DOE Joint Genome Institute"/>
            <person name="Copeland A."/>
            <person name="Lucas S."/>
            <person name="Lapidus A."/>
            <person name="Barry K."/>
            <person name="Detter J.C."/>
            <person name="Glavina del Rio T."/>
            <person name="Hammon N."/>
            <person name="Israni S."/>
            <person name="Dalin E."/>
            <person name="Tice H."/>
            <person name="Pitluck S."/>
            <person name="Chain P."/>
            <person name="Malfatti S."/>
            <person name="Shin M."/>
            <person name="Vergez L."/>
            <person name="Schmutz J."/>
            <person name="Larimer F."/>
            <person name="Land M."/>
            <person name="Hauser L."/>
            <person name="Pelletier D.A."/>
            <person name="Kyrpides N."/>
            <person name="Anderson I."/>
            <person name="Oda Y."/>
            <person name="Harwood C.S."/>
            <person name="Richardson P."/>
        </authorList>
    </citation>
    <scope>NUCLEOTIDE SEQUENCE [LARGE SCALE GENOMIC DNA]</scope>
    <source>
        <strain>BisB18</strain>
    </source>
</reference>